<proteinExistence type="inferred from homology"/>
<sequence>MPILTIREVCNINHWGIGYYDVDDSGEIIVRPNPSQHNQTVSLQKLTEAVQQKHQARLPVLFCFPQILEHRLRDINRAFQTAREECGYKGGYCLVYPIKVNQHRRVIESLMSSGQPHGLEAGSKAELMAVLAHAGNRQTLIVCNGYKDREYIRFALMGEKLGHQVYLVIEKLSEIQMVLEEAEKLGIKPRLGVRARLASQGSGKWQSSGGEKSKFGLSASQVLQLVDILKQKNRLDCLQLLHFHLGSQLGNIRDVATGVHESARFYVELHKLGVNIRCFDVGGGLGVDYEGNRTQSDCSVNYSLNEYAATVVWGISQACLEHGLPHPTIITESGRGITAHHAVLVANVIGVERYKPRRLDAPSPEAPRVLHSMWETWTDISASREKRSLRSWIHEGQFDLADVHNQYNVGLLSLAQRAWAEQLYLNICHEVGELFNEKHRSHRTIIDELQERFADKLYVNFSLFQSLPDAWGIDQLFPVCPITGLNEPIARRAVLLDITCDSDGTIDHYIDGDGIAGTMPMPDYPEEEPPLLGFFMVGAYQEILGNMHNLFGDTATADVVVGEDGQFTVIDYDEGNTVADMLEYVYQDPKELMKRYREQIEHSDLPASQAMSFLKELEAGLNGYTYLEDE</sequence>
<protein>
    <recommendedName>
        <fullName evidence="1">Biosynthetic arginine decarboxylase</fullName>
        <shortName evidence="1">ADC</shortName>
        <ecNumber evidence="1">4.1.1.19</ecNumber>
    </recommendedName>
</protein>
<dbReference type="EC" id="4.1.1.19" evidence="1"/>
<dbReference type="EMBL" id="AE002098">
    <property type="protein sequence ID" value="AAF40905.1"/>
    <property type="molecule type" value="Genomic_DNA"/>
</dbReference>
<dbReference type="PIR" id="A81196">
    <property type="entry name" value="A81196"/>
</dbReference>
<dbReference type="RefSeq" id="NP_273515.1">
    <property type="nucleotide sequence ID" value="NC_003112.2"/>
</dbReference>
<dbReference type="RefSeq" id="WP_002224949.1">
    <property type="nucleotide sequence ID" value="NC_003112.2"/>
</dbReference>
<dbReference type="SMR" id="Q9K0U3"/>
<dbReference type="FunCoup" id="Q9K0U3">
    <property type="interactions" value="123"/>
</dbReference>
<dbReference type="STRING" id="122586.NMB0468"/>
<dbReference type="PaxDb" id="122586-NMB0468"/>
<dbReference type="KEGG" id="nme:NMB0468"/>
<dbReference type="PATRIC" id="fig|122586.8.peg.613"/>
<dbReference type="HOGENOM" id="CLU_027243_1_0_4"/>
<dbReference type="InParanoid" id="Q9K0U3"/>
<dbReference type="OrthoDB" id="9802658at2"/>
<dbReference type="UniPathway" id="UPA00186">
    <property type="reaction ID" value="UER00284"/>
</dbReference>
<dbReference type="Proteomes" id="UP000000425">
    <property type="component" value="Chromosome"/>
</dbReference>
<dbReference type="GO" id="GO:0008792">
    <property type="term" value="F:arginine decarboxylase activity"/>
    <property type="evidence" value="ECO:0000318"/>
    <property type="project" value="GO_Central"/>
</dbReference>
<dbReference type="GO" id="GO:0046872">
    <property type="term" value="F:metal ion binding"/>
    <property type="evidence" value="ECO:0007669"/>
    <property type="project" value="UniProtKB-KW"/>
</dbReference>
<dbReference type="GO" id="GO:0006527">
    <property type="term" value="P:arginine catabolic process"/>
    <property type="evidence" value="ECO:0007669"/>
    <property type="project" value="InterPro"/>
</dbReference>
<dbReference type="GO" id="GO:0033388">
    <property type="term" value="P:putrescine biosynthetic process from arginine"/>
    <property type="evidence" value="ECO:0000318"/>
    <property type="project" value="GO_Central"/>
</dbReference>
<dbReference type="GO" id="GO:0008295">
    <property type="term" value="P:spermidine biosynthetic process"/>
    <property type="evidence" value="ECO:0007669"/>
    <property type="project" value="UniProtKB-UniRule"/>
</dbReference>
<dbReference type="CDD" id="cd06830">
    <property type="entry name" value="PLPDE_III_ADC"/>
    <property type="match status" value="1"/>
</dbReference>
<dbReference type="FunFam" id="1.10.287.3440:FF:000001">
    <property type="entry name" value="Biosynthetic arginine decarboxylase"/>
    <property type="match status" value="1"/>
</dbReference>
<dbReference type="FunFam" id="1.20.58.930:FF:000001">
    <property type="entry name" value="Biosynthetic arginine decarboxylase"/>
    <property type="match status" value="1"/>
</dbReference>
<dbReference type="FunFam" id="2.40.37.10:FF:000001">
    <property type="entry name" value="Biosynthetic arginine decarboxylase"/>
    <property type="match status" value="1"/>
</dbReference>
<dbReference type="FunFam" id="3.20.20.10:FF:000001">
    <property type="entry name" value="Biosynthetic arginine decarboxylase"/>
    <property type="match status" value="1"/>
</dbReference>
<dbReference type="Gene3D" id="1.10.287.3440">
    <property type="match status" value="1"/>
</dbReference>
<dbReference type="Gene3D" id="1.20.58.930">
    <property type="match status" value="1"/>
</dbReference>
<dbReference type="Gene3D" id="3.20.20.10">
    <property type="entry name" value="Alanine racemase"/>
    <property type="match status" value="1"/>
</dbReference>
<dbReference type="Gene3D" id="2.40.37.10">
    <property type="entry name" value="Lyase, Ornithine Decarboxylase, Chain A, domain 1"/>
    <property type="match status" value="1"/>
</dbReference>
<dbReference type="HAMAP" id="MF_01417">
    <property type="entry name" value="SpeA"/>
    <property type="match status" value="1"/>
</dbReference>
<dbReference type="InterPro" id="IPR009006">
    <property type="entry name" value="Ala_racemase/Decarboxylase_C"/>
</dbReference>
<dbReference type="InterPro" id="IPR040634">
    <property type="entry name" value="Arg_decarb_HB"/>
</dbReference>
<dbReference type="InterPro" id="IPR041128">
    <property type="entry name" value="Arg_decarbox_C"/>
</dbReference>
<dbReference type="InterPro" id="IPR002985">
    <property type="entry name" value="Arg_decrbxlase"/>
</dbReference>
<dbReference type="InterPro" id="IPR022657">
    <property type="entry name" value="De-COase2_CS"/>
</dbReference>
<dbReference type="InterPro" id="IPR022644">
    <property type="entry name" value="De-COase2_N"/>
</dbReference>
<dbReference type="InterPro" id="IPR022653">
    <property type="entry name" value="De-COase2_pyr-phos_BS"/>
</dbReference>
<dbReference type="InterPro" id="IPR000183">
    <property type="entry name" value="Orn/DAP/Arg_de-COase"/>
</dbReference>
<dbReference type="InterPro" id="IPR029066">
    <property type="entry name" value="PLP-binding_barrel"/>
</dbReference>
<dbReference type="NCBIfam" id="NF003763">
    <property type="entry name" value="PRK05354.1"/>
    <property type="match status" value="1"/>
</dbReference>
<dbReference type="NCBIfam" id="TIGR01273">
    <property type="entry name" value="speA"/>
    <property type="match status" value="1"/>
</dbReference>
<dbReference type="PANTHER" id="PTHR43295">
    <property type="entry name" value="ARGININE DECARBOXYLASE"/>
    <property type="match status" value="1"/>
</dbReference>
<dbReference type="PANTHER" id="PTHR43295:SF9">
    <property type="entry name" value="BIOSYNTHETIC ARGININE DECARBOXYLASE"/>
    <property type="match status" value="1"/>
</dbReference>
<dbReference type="Pfam" id="PF17810">
    <property type="entry name" value="Arg_decarb_HB"/>
    <property type="match status" value="1"/>
</dbReference>
<dbReference type="Pfam" id="PF17944">
    <property type="entry name" value="Arg_decarbox_C"/>
    <property type="match status" value="1"/>
</dbReference>
<dbReference type="Pfam" id="PF02784">
    <property type="entry name" value="Orn_Arg_deC_N"/>
    <property type="match status" value="1"/>
</dbReference>
<dbReference type="PIRSF" id="PIRSF001336">
    <property type="entry name" value="Arg_decrbxlase"/>
    <property type="match status" value="1"/>
</dbReference>
<dbReference type="PRINTS" id="PR01180">
    <property type="entry name" value="ARGDCRBXLASE"/>
</dbReference>
<dbReference type="PRINTS" id="PR01179">
    <property type="entry name" value="ODADCRBXLASE"/>
</dbReference>
<dbReference type="SUPFAM" id="SSF50621">
    <property type="entry name" value="Alanine racemase C-terminal domain-like"/>
    <property type="match status" value="1"/>
</dbReference>
<dbReference type="SUPFAM" id="SSF51419">
    <property type="entry name" value="PLP-binding barrel"/>
    <property type="match status" value="1"/>
</dbReference>
<dbReference type="PROSITE" id="PS00878">
    <property type="entry name" value="ODR_DC_2_1"/>
    <property type="match status" value="1"/>
</dbReference>
<dbReference type="PROSITE" id="PS00879">
    <property type="entry name" value="ODR_DC_2_2"/>
    <property type="match status" value="1"/>
</dbReference>
<comment type="function">
    <text evidence="1">Catalyzes the biosynthesis of agmatine from arginine.</text>
</comment>
<comment type="catalytic activity">
    <reaction evidence="1">
        <text>L-arginine + H(+) = agmatine + CO2</text>
        <dbReference type="Rhea" id="RHEA:17641"/>
        <dbReference type="ChEBI" id="CHEBI:15378"/>
        <dbReference type="ChEBI" id="CHEBI:16526"/>
        <dbReference type="ChEBI" id="CHEBI:32682"/>
        <dbReference type="ChEBI" id="CHEBI:58145"/>
        <dbReference type="EC" id="4.1.1.19"/>
    </reaction>
</comment>
<comment type="cofactor">
    <cofactor evidence="1">
        <name>Mg(2+)</name>
        <dbReference type="ChEBI" id="CHEBI:18420"/>
    </cofactor>
</comment>
<comment type="cofactor">
    <cofactor evidence="1">
        <name>pyridoxal 5'-phosphate</name>
        <dbReference type="ChEBI" id="CHEBI:597326"/>
    </cofactor>
</comment>
<comment type="pathway">
    <text evidence="1">Amine and polyamine biosynthesis; agmatine biosynthesis; agmatine from L-arginine: step 1/1.</text>
</comment>
<comment type="similarity">
    <text evidence="1">Belongs to the Orn/Lys/Arg decarboxylase class-II family. SpeA subfamily.</text>
</comment>
<organism>
    <name type="scientific">Neisseria meningitidis serogroup B (strain ATCC BAA-335 / MC58)</name>
    <dbReference type="NCBI Taxonomy" id="122586"/>
    <lineage>
        <taxon>Bacteria</taxon>
        <taxon>Pseudomonadati</taxon>
        <taxon>Pseudomonadota</taxon>
        <taxon>Betaproteobacteria</taxon>
        <taxon>Neisseriales</taxon>
        <taxon>Neisseriaceae</taxon>
        <taxon>Neisseria</taxon>
    </lineage>
</organism>
<gene>
    <name evidence="1" type="primary">speA</name>
    <name type="ordered locus">NMB0468</name>
</gene>
<accession>Q9K0U3</accession>
<evidence type="ECO:0000255" key="1">
    <source>
        <dbReference type="HAMAP-Rule" id="MF_01417"/>
    </source>
</evidence>
<name>SPEA_NEIMB</name>
<feature type="chain" id="PRO_0000149965" description="Biosynthetic arginine decarboxylase">
    <location>
        <begin position="1"/>
        <end position="630"/>
    </location>
</feature>
<feature type="binding site" evidence="1">
    <location>
        <begin position="279"/>
        <end position="289"/>
    </location>
    <ligand>
        <name>substrate</name>
    </ligand>
</feature>
<feature type="modified residue" description="N6-(pyridoxal phosphate)lysine" evidence="1">
    <location>
        <position position="99"/>
    </location>
</feature>
<keyword id="KW-0210">Decarboxylase</keyword>
<keyword id="KW-0456">Lyase</keyword>
<keyword id="KW-0460">Magnesium</keyword>
<keyword id="KW-0479">Metal-binding</keyword>
<keyword id="KW-0620">Polyamine biosynthesis</keyword>
<keyword id="KW-0661">Putrescine biosynthesis</keyword>
<keyword id="KW-0663">Pyridoxal phosphate</keyword>
<keyword id="KW-1185">Reference proteome</keyword>
<keyword id="KW-0745">Spermidine biosynthesis</keyword>
<reference key="1">
    <citation type="journal article" date="2000" name="Science">
        <title>Complete genome sequence of Neisseria meningitidis serogroup B strain MC58.</title>
        <authorList>
            <person name="Tettelin H."/>
            <person name="Saunders N.J."/>
            <person name="Heidelberg J.F."/>
            <person name="Jeffries A.C."/>
            <person name="Nelson K.E."/>
            <person name="Eisen J.A."/>
            <person name="Ketchum K.A."/>
            <person name="Hood D.W."/>
            <person name="Peden J.F."/>
            <person name="Dodson R.J."/>
            <person name="Nelson W.C."/>
            <person name="Gwinn M.L."/>
            <person name="DeBoy R.T."/>
            <person name="Peterson J.D."/>
            <person name="Hickey E.K."/>
            <person name="Haft D.H."/>
            <person name="Salzberg S.L."/>
            <person name="White O."/>
            <person name="Fleischmann R.D."/>
            <person name="Dougherty B.A."/>
            <person name="Mason T.M."/>
            <person name="Ciecko A."/>
            <person name="Parksey D.S."/>
            <person name="Blair E."/>
            <person name="Cittone H."/>
            <person name="Clark E.B."/>
            <person name="Cotton M.D."/>
            <person name="Utterback T.R."/>
            <person name="Khouri H.M."/>
            <person name="Qin H."/>
            <person name="Vamathevan J.J."/>
            <person name="Gill J."/>
            <person name="Scarlato V."/>
            <person name="Masignani V."/>
            <person name="Pizza M."/>
            <person name="Grandi G."/>
            <person name="Sun L."/>
            <person name="Smith H.O."/>
            <person name="Fraser C.M."/>
            <person name="Moxon E.R."/>
            <person name="Rappuoli R."/>
            <person name="Venter J.C."/>
        </authorList>
    </citation>
    <scope>NUCLEOTIDE SEQUENCE [LARGE SCALE GENOMIC DNA]</scope>
    <source>
        <strain>ATCC BAA-335 / MC58</strain>
    </source>
</reference>